<feature type="chain" id="PRO_0000079040" description="Nucleoprotein">
    <location>
        <begin position="1"/>
        <end position="498"/>
    </location>
</feature>
<feature type="region of interest" description="Disordered" evidence="2">
    <location>
        <begin position="1"/>
        <end position="21"/>
    </location>
</feature>
<feature type="short sequence motif" description="Unconventional nuclear localization signal" evidence="1">
    <location>
        <begin position="1"/>
        <end position="18"/>
    </location>
</feature>
<feature type="short sequence motif" description="Bipartite nuclear localization signal" evidence="1">
    <location>
        <begin position="198"/>
        <end position="216"/>
    </location>
</feature>
<protein>
    <recommendedName>
        <fullName evidence="1">Nucleoprotein</fullName>
    </recommendedName>
    <alternativeName>
        <fullName evidence="1">Nucleocapsid protein</fullName>
        <shortName evidence="1">Protein N</shortName>
    </alternativeName>
</protein>
<gene>
    <name evidence="1" type="primary">NP</name>
</gene>
<organism>
    <name type="scientific">Influenza A virus (strain A/Duck/New Zealand/31/1976 H4N6)</name>
    <dbReference type="NCBI Taxonomy" id="385592"/>
    <lineage>
        <taxon>Viruses</taxon>
        <taxon>Riboviria</taxon>
        <taxon>Orthornavirae</taxon>
        <taxon>Negarnaviricota</taxon>
        <taxon>Polyploviricotina</taxon>
        <taxon>Insthoviricetes</taxon>
        <taxon>Articulavirales</taxon>
        <taxon>Orthomyxoviridae</taxon>
        <taxon>Alphainfluenzavirus</taxon>
        <taxon>Alphainfluenzavirus influenzae</taxon>
        <taxon>Influenza A virus</taxon>
    </lineage>
</organism>
<keyword id="KW-0167">Capsid protein</keyword>
<keyword id="KW-1139">Helical capsid protein</keyword>
<keyword id="KW-1048">Host nucleus</keyword>
<keyword id="KW-0945">Host-virus interaction</keyword>
<keyword id="KW-0687">Ribonucleoprotein</keyword>
<keyword id="KW-0694">RNA-binding</keyword>
<keyword id="KW-0543">Viral nucleoprotein</keyword>
<keyword id="KW-1163">Viral penetration into host nucleus</keyword>
<keyword id="KW-0946">Virion</keyword>
<keyword id="KW-1160">Virus entry into host cell</keyword>
<name>NCAP_I76AK</name>
<evidence type="ECO:0000255" key="1">
    <source>
        <dbReference type="HAMAP-Rule" id="MF_04070"/>
    </source>
</evidence>
<evidence type="ECO:0000256" key="2">
    <source>
        <dbReference type="SAM" id="MobiDB-lite"/>
    </source>
</evidence>
<organismHost>
    <name type="scientific">Aves</name>
    <dbReference type="NCBI Taxonomy" id="8782"/>
</organismHost>
<organismHost>
    <name type="scientific">Sus scrofa</name>
    <name type="common">Pig</name>
    <dbReference type="NCBI Taxonomy" id="9823"/>
</organismHost>
<dbReference type="EMBL" id="M30760">
    <property type="protein sequence ID" value="AAA43481.1"/>
    <property type="molecule type" value="Genomic_RNA"/>
</dbReference>
<dbReference type="SMR" id="P15664"/>
<dbReference type="GO" id="GO:0019029">
    <property type="term" value="C:helical viral capsid"/>
    <property type="evidence" value="ECO:0007669"/>
    <property type="project" value="UniProtKB-UniRule"/>
</dbReference>
<dbReference type="GO" id="GO:0043657">
    <property type="term" value="C:host cell"/>
    <property type="evidence" value="ECO:0007669"/>
    <property type="project" value="GOC"/>
</dbReference>
<dbReference type="GO" id="GO:0042025">
    <property type="term" value="C:host cell nucleus"/>
    <property type="evidence" value="ECO:0007669"/>
    <property type="project" value="UniProtKB-SubCell"/>
</dbReference>
<dbReference type="GO" id="GO:1990904">
    <property type="term" value="C:ribonucleoprotein complex"/>
    <property type="evidence" value="ECO:0007669"/>
    <property type="project" value="UniProtKB-KW"/>
</dbReference>
<dbReference type="GO" id="GO:0019013">
    <property type="term" value="C:viral nucleocapsid"/>
    <property type="evidence" value="ECO:0007669"/>
    <property type="project" value="UniProtKB-UniRule"/>
</dbReference>
<dbReference type="GO" id="GO:0003723">
    <property type="term" value="F:RNA binding"/>
    <property type="evidence" value="ECO:0007669"/>
    <property type="project" value="UniProtKB-UniRule"/>
</dbReference>
<dbReference type="GO" id="GO:0005198">
    <property type="term" value="F:structural molecule activity"/>
    <property type="evidence" value="ECO:0007669"/>
    <property type="project" value="UniProtKB-UniRule"/>
</dbReference>
<dbReference type="GO" id="GO:0046718">
    <property type="term" value="P:symbiont entry into host cell"/>
    <property type="evidence" value="ECO:0007669"/>
    <property type="project" value="UniProtKB-KW"/>
</dbReference>
<dbReference type="GO" id="GO:0075732">
    <property type="term" value="P:viral penetration into host nucleus"/>
    <property type="evidence" value="ECO:0007669"/>
    <property type="project" value="UniProtKB-UniRule"/>
</dbReference>
<dbReference type="HAMAP" id="MF_04070">
    <property type="entry name" value="INFV_NCAP"/>
    <property type="match status" value="1"/>
</dbReference>
<dbReference type="InterPro" id="IPR002141">
    <property type="entry name" value="Flu_NP"/>
</dbReference>
<dbReference type="Pfam" id="PF00506">
    <property type="entry name" value="Flu_NP"/>
    <property type="match status" value="1"/>
</dbReference>
<dbReference type="SUPFAM" id="SSF161003">
    <property type="entry name" value="flu NP-like"/>
    <property type="match status" value="1"/>
</dbReference>
<proteinExistence type="inferred from homology"/>
<accession>P15664</accession>
<reference key="1">
    <citation type="journal article" date="1990" name="J. Virol.">
        <title>Evolution of the nucleoprotein gene of influenza A virus.</title>
        <authorList>
            <person name="Gorman O.T."/>
            <person name="Bean W.J."/>
            <person name="Kawaoka Y."/>
            <person name="Webster R.G."/>
        </authorList>
    </citation>
    <scope>NUCLEOTIDE SEQUENCE [GENOMIC RNA]</scope>
</reference>
<sequence length="498" mass="56266">MASQGTKRSYEQMETGGERQNATEIRASVGRMVGGIGRFYIQMCTELKLSDYEGRLIQNSITIERMVLSAFDERRNKYLEEHPSAGKDPKKTGGPIYRRRDGKWVRELILYDKEEIRRIWRQANNGEDATAGLTHLMIWHSNLNDATYQRTRALVRTGMDPRMCSLMQGSTLPRRSGAAGAAVKGVGTMVMELIRMIKRGINDRNFWRGENGRRTRIAYERMCNILKGKFQTAAQRAMMDQVRESRNPGNAEIEDLIFLARSALILRGSVAHKSCLPACVYGLAVASGYDFEREGYSLVGIDPFRLLQNSQVFSLIRPNENPAHKSQLVWMACHSAAFEDLRVSSFIRGTRVIPRGQLSTRGVQIASNENMETMDSSTLELRSRYWAIRTRSGGNTNQQRASAGQISVQPTFSVQRNLPFERATIMAAFTGNTEGRTSDMRTEIIRMMESARPEDVSFQGRGVFELSDEKATNPIVPSFDMSNEGSYFFGDNAEEYDN</sequence>
<comment type="function">
    <text evidence="1">Encapsidates the negative strand viral RNA, protecting it from nucleases. The encapsidated genomic RNA is termed the ribonucleoprotein (RNP) and serves as template for transcription and replication. The RNP needs to be localized in the host nucleus to start an infectious cycle, but is too large to diffuse through the nuclear pore complex. NP comprises at least 2 nuclear localization signals that are responsible for the active RNP import into the nucleus through cellular importin alpha/beta pathway. Later in the infection, nclear export of RNPs are mediated through viral proteins NEP interacting with M1 which binds nucleoproteins. It is possible that nucleoprotein binds directly host exportin-1/XPO1 and plays an active role in RNPs nuclear export. M1 interaction with RNP seems to hide nucleoprotein's nuclear localization signals. Soon after a virion infects a new cell, M1 dissociates from the RNP under acidification of the virion driven by M2 protein. Dissociation of M1 from RNP unmasks nucleoprotein's nuclear localization signals, targeting the RNP to the nucleus.</text>
</comment>
<comment type="subunit">
    <text evidence="1">Homomultimerizes to form the nucleocapsid. May bind host exportin-1/XPO1. Binds to viral genomic RNA. Protein-RNA contacts are mediated by a combination of electrostatic interactions between positively charged residues and the phosphate backbone and planar interactions between aromatic side chains and bases.</text>
</comment>
<comment type="subcellular location">
    <subcellularLocation>
        <location evidence="1">Virion</location>
    </subcellularLocation>
    <subcellularLocation>
        <location evidence="1">Host nucleus</location>
    </subcellularLocation>
</comment>
<comment type="PTM">
    <text evidence="1">Late in virus-infected cells, may be cleaved from a 56-kDa protein to a 53-kDa protein by a cellular caspase. This cleavage might be a marker for the onset of apoptosis in infected cells or have a specific function in virus host interaction.</text>
</comment>
<comment type="similarity">
    <text evidence="1">Belongs to the influenza viruses nucleoprotein family.</text>
</comment>